<organism>
    <name type="scientific">Koribacter versatilis (strain Ellin345)</name>
    <dbReference type="NCBI Taxonomy" id="204669"/>
    <lineage>
        <taxon>Bacteria</taxon>
        <taxon>Pseudomonadati</taxon>
        <taxon>Acidobacteriota</taxon>
        <taxon>Terriglobia</taxon>
        <taxon>Terriglobales</taxon>
        <taxon>Candidatus Korobacteraceae</taxon>
        <taxon>Candidatus Korobacter</taxon>
    </lineage>
</organism>
<dbReference type="EC" id="6.3.5.7" evidence="1"/>
<dbReference type="EMBL" id="CP000360">
    <property type="protein sequence ID" value="ABF39506.1"/>
    <property type="molecule type" value="Genomic_DNA"/>
</dbReference>
<dbReference type="RefSeq" id="WP_011521308.1">
    <property type="nucleotide sequence ID" value="NC_008009.1"/>
</dbReference>
<dbReference type="SMR" id="Q1IUE4"/>
<dbReference type="STRING" id="204669.Acid345_0501"/>
<dbReference type="EnsemblBacteria" id="ABF39506">
    <property type="protein sequence ID" value="ABF39506"/>
    <property type="gene ID" value="Acid345_0501"/>
</dbReference>
<dbReference type="KEGG" id="aba:Acid345_0501"/>
<dbReference type="eggNOG" id="COG0154">
    <property type="taxonomic scope" value="Bacteria"/>
</dbReference>
<dbReference type="HOGENOM" id="CLU_009600_0_3_0"/>
<dbReference type="OrthoDB" id="9811471at2"/>
<dbReference type="Proteomes" id="UP000002432">
    <property type="component" value="Chromosome"/>
</dbReference>
<dbReference type="GO" id="GO:0030956">
    <property type="term" value="C:glutamyl-tRNA(Gln) amidotransferase complex"/>
    <property type="evidence" value="ECO:0007669"/>
    <property type="project" value="InterPro"/>
</dbReference>
<dbReference type="GO" id="GO:0005524">
    <property type="term" value="F:ATP binding"/>
    <property type="evidence" value="ECO:0007669"/>
    <property type="project" value="UniProtKB-KW"/>
</dbReference>
<dbReference type="GO" id="GO:0050567">
    <property type="term" value="F:glutaminyl-tRNA synthase (glutamine-hydrolyzing) activity"/>
    <property type="evidence" value="ECO:0007669"/>
    <property type="project" value="UniProtKB-UniRule"/>
</dbReference>
<dbReference type="GO" id="GO:0006412">
    <property type="term" value="P:translation"/>
    <property type="evidence" value="ECO:0007669"/>
    <property type="project" value="UniProtKB-UniRule"/>
</dbReference>
<dbReference type="Gene3D" id="3.90.1300.10">
    <property type="entry name" value="Amidase signature (AS) domain"/>
    <property type="match status" value="1"/>
</dbReference>
<dbReference type="HAMAP" id="MF_00120">
    <property type="entry name" value="GatA"/>
    <property type="match status" value="1"/>
</dbReference>
<dbReference type="InterPro" id="IPR000120">
    <property type="entry name" value="Amidase"/>
</dbReference>
<dbReference type="InterPro" id="IPR020556">
    <property type="entry name" value="Amidase_CS"/>
</dbReference>
<dbReference type="InterPro" id="IPR023631">
    <property type="entry name" value="Amidase_dom"/>
</dbReference>
<dbReference type="InterPro" id="IPR036928">
    <property type="entry name" value="AS_sf"/>
</dbReference>
<dbReference type="InterPro" id="IPR004412">
    <property type="entry name" value="GatA"/>
</dbReference>
<dbReference type="NCBIfam" id="TIGR00132">
    <property type="entry name" value="gatA"/>
    <property type="match status" value="1"/>
</dbReference>
<dbReference type="PANTHER" id="PTHR11895:SF151">
    <property type="entry name" value="GLUTAMYL-TRNA(GLN) AMIDOTRANSFERASE SUBUNIT A"/>
    <property type="match status" value="1"/>
</dbReference>
<dbReference type="PANTHER" id="PTHR11895">
    <property type="entry name" value="TRANSAMIDASE"/>
    <property type="match status" value="1"/>
</dbReference>
<dbReference type="Pfam" id="PF01425">
    <property type="entry name" value="Amidase"/>
    <property type="match status" value="1"/>
</dbReference>
<dbReference type="SUPFAM" id="SSF75304">
    <property type="entry name" value="Amidase signature (AS) enzymes"/>
    <property type="match status" value="1"/>
</dbReference>
<dbReference type="PROSITE" id="PS00571">
    <property type="entry name" value="AMIDASES"/>
    <property type="match status" value="1"/>
</dbReference>
<feature type="chain" id="PRO_1000015793" description="Glutamyl-tRNA(Gln) amidotransferase subunit A">
    <location>
        <begin position="1"/>
        <end position="480"/>
    </location>
</feature>
<feature type="region of interest" description="Disordered" evidence="2">
    <location>
        <begin position="133"/>
        <end position="156"/>
    </location>
</feature>
<feature type="active site" description="Charge relay system" evidence="1">
    <location>
        <position position="79"/>
    </location>
</feature>
<feature type="active site" description="Charge relay system" evidence="1">
    <location>
        <position position="154"/>
    </location>
</feature>
<feature type="active site" description="Acyl-ester intermediate" evidence="1">
    <location>
        <position position="178"/>
    </location>
</feature>
<proteinExistence type="inferred from homology"/>
<gene>
    <name evidence="1" type="primary">gatA</name>
    <name type="ordered locus">Acid345_0501</name>
</gene>
<protein>
    <recommendedName>
        <fullName evidence="1">Glutamyl-tRNA(Gln) amidotransferase subunit A</fullName>
        <shortName evidence="1">Glu-ADT subunit A</shortName>
        <ecNumber evidence="1">6.3.5.7</ecNumber>
    </recommendedName>
</protein>
<keyword id="KW-0067">ATP-binding</keyword>
<keyword id="KW-0436">Ligase</keyword>
<keyword id="KW-0547">Nucleotide-binding</keyword>
<keyword id="KW-0648">Protein biosynthesis</keyword>
<keyword id="KW-1185">Reference proteome</keyword>
<comment type="function">
    <text evidence="1">Allows the formation of correctly charged Gln-tRNA(Gln) through the transamidation of misacylated Glu-tRNA(Gln) in organisms which lack glutaminyl-tRNA synthetase. The reaction takes place in the presence of glutamine and ATP through an activated gamma-phospho-Glu-tRNA(Gln).</text>
</comment>
<comment type="catalytic activity">
    <reaction evidence="1">
        <text>L-glutamyl-tRNA(Gln) + L-glutamine + ATP + H2O = L-glutaminyl-tRNA(Gln) + L-glutamate + ADP + phosphate + H(+)</text>
        <dbReference type="Rhea" id="RHEA:17521"/>
        <dbReference type="Rhea" id="RHEA-COMP:9681"/>
        <dbReference type="Rhea" id="RHEA-COMP:9684"/>
        <dbReference type="ChEBI" id="CHEBI:15377"/>
        <dbReference type="ChEBI" id="CHEBI:15378"/>
        <dbReference type="ChEBI" id="CHEBI:29985"/>
        <dbReference type="ChEBI" id="CHEBI:30616"/>
        <dbReference type="ChEBI" id="CHEBI:43474"/>
        <dbReference type="ChEBI" id="CHEBI:58359"/>
        <dbReference type="ChEBI" id="CHEBI:78520"/>
        <dbReference type="ChEBI" id="CHEBI:78521"/>
        <dbReference type="ChEBI" id="CHEBI:456216"/>
        <dbReference type="EC" id="6.3.5.7"/>
    </reaction>
</comment>
<comment type="subunit">
    <text evidence="1">Heterotrimer of A, B and C subunits.</text>
</comment>
<comment type="similarity">
    <text evidence="1">Belongs to the amidase family. GatA subfamily.</text>
</comment>
<accession>Q1IUE4</accession>
<name>GATA_KORVE</name>
<reference key="1">
    <citation type="journal article" date="2009" name="Appl. Environ. Microbiol.">
        <title>Three genomes from the phylum Acidobacteria provide insight into the lifestyles of these microorganisms in soils.</title>
        <authorList>
            <person name="Ward N.L."/>
            <person name="Challacombe J.F."/>
            <person name="Janssen P.H."/>
            <person name="Henrissat B."/>
            <person name="Coutinho P.M."/>
            <person name="Wu M."/>
            <person name="Xie G."/>
            <person name="Haft D.H."/>
            <person name="Sait M."/>
            <person name="Badger J."/>
            <person name="Barabote R.D."/>
            <person name="Bradley B."/>
            <person name="Brettin T.S."/>
            <person name="Brinkac L.M."/>
            <person name="Bruce D."/>
            <person name="Creasy T."/>
            <person name="Daugherty S.C."/>
            <person name="Davidsen T.M."/>
            <person name="DeBoy R.T."/>
            <person name="Detter J.C."/>
            <person name="Dodson R.J."/>
            <person name="Durkin A.S."/>
            <person name="Ganapathy A."/>
            <person name="Gwinn-Giglio M."/>
            <person name="Han C.S."/>
            <person name="Khouri H."/>
            <person name="Kiss H."/>
            <person name="Kothari S.P."/>
            <person name="Madupu R."/>
            <person name="Nelson K.E."/>
            <person name="Nelson W.C."/>
            <person name="Paulsen I."/>
            <person name="Penn K."/>
            <person name="Ren Q."/>
            <person name="Rosovitz M.J."/>
            <person name="Selengut J.D."/>
            <person name="Shrivastava S."/>
            <person name="Sullivan S.A."/>
            <person name="Tapia R."/>
            <person name="Thompson L.S."/>
            <person name="Watkins K.L."/>
            <person name="Yang Q."/>
            <person name="Yu C."/>
            <person name="Zafar N."/>
            <person name="Zhou L."/>
            <person name="Kuske C.R."/>
        </authorList>
    </citation>
    <scope>NUCLEOTIDE SEQUENCE [LARGE SCALE GENOMIC DNA]</scope>
    <source>
        <strain>Ellin345</strain>
    </source>
</reference>
<evidence type="ECO:0000255" key="1">
    <source>
        <dbReference type="HAMAP-Rule" id="MF_00120"/>
    </source>
</evidence>
<evidence type="ECO:0000256" key="2">
    <source>
        <dbReference type="SAM" id="MobiDB-lite"/>
    </source>
</evidence>
<sequence length="480" mass="50859">MDINVLTIDATRIAIQERQATATAIAESFYKKIEAEDGEINAYLTLSRDRALAQAAKIDAIADRGDDLPRLAGLPVAIKDVISTKGVRTTAGSKILEEFIAPYDATVVQKLEAAGAVILGKTNCDEFAMGSSNENSAYGPVRNPRDKSRVPGGSSGGSAAVVAAGTAVTSLGSDTGGSIRQPASFCGVVGLMPTYGRVSRYGLIAFASSLDHIGPFAKDVKDAAIMLEVIAGRDPMDATSAEVAVPKYSDEIGKPVRGMKIGVAKEYFGEGLDPEVKASVEASIQNLAKAGAEIIEVSLPHTKYAIPTYYLVATAEASSNLARFDGVRYSHRSKEAKTLSEMYRKSRDEGFGAEVKRRIILGTYALSAGYYDAYYLKAQKVRTLLAQDFDEAFAKVDAIVTPTTPTPAFKLGEKADDPLAMYLADIFTVTADLVGIPGISVPCGSSKDGLPIGLQVFAKHFQEATMIRVAHAVEHALAAV</sequence>